<sequence length="149" mass="15784">MQVILLDKVANLGSLGDQVNVKAGYARNFLVPQGKAVPATKKNVEYFEARRAELEAKLADVLAAANARAEKINALETVTIASKAGDEGKLFGSIGTRDIADAVTAAGVDVAKSEVRLPNGVLRTTGEHEVNFQVHSEVFAKVIINVVAE</sequence>
<comment type="function">
    <text evidence="1">Binds to the 23S rRNA.</text>
</comment>
<comment type="similarity">
    <text evidence="1">Belongs to the bacterial ribosomal protein bL9 family.</text>
</comment>
<protein>
    <recommendedName>
        <fullName evidence="1">Large ribosomal subunit protein bL9</fullName>
    </recommendedName>
    <alternativeName>
        <fullName evidence="2">50S ribosomal protein L9</fullName>
    </alternativeName>
</protein>
<feature type="chain" id="PRO_1000126963" description="Large ribosomal subunit protein bL9">
    <location>
        <begin position="1"/>
        <end position="149"/>
    </location>
</feature>
<organism>
    <name type="scientific">Salmonella agona (strain SL483)</name>
    <dbReference type="NCBI Taxonomy" id="454166"/>
    <lineage>
        <taxon>Bacteria</taxon>
        <taxon>Pseudomonadati</taxon>
        <taxon>Pseudomonadota</taxon>
        <taxon>Gammaproteobacteria</taxon>
        <taxon>Enterobacterales</taxon>
        <taxon>Enterobacteriaceae</taxon>
        <taxon>Salmonella</taxon>
    </lineage>
</organism>
<name>RL9_SALA4</name>
<evidence type="ECO:0000255" key="1">
    <source>
        <dbReference type="HAMAP-Rule" id="MF_00503"/>
    </source>
</evidence>
<evidence type="ECO:0000305" key="2"/>
<accession>B5F3C0</accession>
<dbReference type="EMBL" id="CP001138">
    <property type="protein sequence ID" value="ACH51355.1"/>
    <property type="molecule type" value="Genomic_DNA"/>
</dbReference>
<dbReference type="RefSeq" id="WP_001196065.1">
    <property type="nucleotide sequence ID" value="NC_011149.1"/>
</dbReference>
<dbReference type="SMR" id="B5F3C0"/>
<dbReference type="GeneID" id="66758618"/>
<dbReference type="KEGG" id="sea:SeAg_B4672"/>
<dbReference type="HOGENOM" id="CLU_078938_4_1_6"/>
<dbReference type="Proteomes" id="UP000008819">
    <property type="component" value="Chromosome"/>
</dbReference>
<dbReference type="GO" id="GO:1990904">
    <property type="term" value="C:ribonucleoprotein complex"/>
    <property type="evidence" value="ECO:0007669"/>
    <property type="project" value="UniProtKB-KW"/>
</dbReference>
<dbReference type="GO" id="GO:0005840">
    <property type="term" value="C:ribosome"/>
    <property type="evidence" value="ECO:0007669"/>
    <property type="project" value="UniProtKB-KW"/>
</dbReference>
<dbReference type="GO" id="GO:0019843">
    <property type="term" value="F:rRNA binding"/>
    <property type="evidence" value="ECO:0007669"/>
    <property type="project" value="UniProtKB-UniRule"/>
</dbReference>
<dbReference type="GO" id="GO:0003735">
    <property type="term" value="F:structural constituent of ribosome"/>
    <property type="evidence" value="ECO:0007669"/>
    <property type="project" value="InterPro"/>
</dbReference>
<dbReference type="GO" id="GO:0006412">
    <property type="term" value="P:translation"/>
    <property type="evidence" value="ECO:0007669"/>
    <property type="project" value="UniProtKB-UniRule"/>
</dbReference>
<dbReference type="FunFam" id="3.10.430.100:FF:000001">
    <property type="entry name" value="50S ribosomal protein L9"/>
    <property type="match status" value="1"/>
</dbReference>
<dbReference type="FunFam" id="3.40.5.10:FF:000001">
    <property type="entry name" value="50S ribosomal protein L9"/>
    <property type="match status" value="1"/>
</dbReference>
<dbReference type="Gene3D" id="3.10.430.100">
    <property type="entry name" value="Ribosomal protein L9, C-terminal domain"/>
    <property type="match status" value="1"/>
</dbReference>
<dbReference type="Gene3D" id="3.40.5.10">
    <property type="entry name" value="Ribosomal protein L9, N-terminal domain"/>
    <property type="match status" value="1"/>
</dbReference>
<dbReference type="HAMAP" id="MF_00503">
    <property type="entry name" value="Ribosomal_bL9"/>
    <property type="match status" value="1"/>
</dbReference>
<dbReference type="InterPro" id="IPR000244">
    <property type="entry name" value="Ribosomal_bL9"/>
</dbReference>
<dbReference type="InterPro" id="IPR009027">
    <property type="entry name" value="Ribosomal_bL9/RNase_H1_N"/>
</dbReference>
<dbReference type="InterPro" id="IPR020594">
    <property type="entry name" value="Ribosomal_bL9_bac/chp"/>
</dbReference>
<dbReference type="InterPro" id="IPR020069">
    <property type="entry name" value="Ribosomal_bL9_C"/>
</dbReference>
<dbReference type="InterPro" id="IPR036791">
    <property type="entry name" value="Ribosomal_bL9_C_sf"/>
</dbReference>
<dbReference type="InterPro" id="IPR020070">
    <property type="entry name" value="Ribosomal_bL9_N"/>
</dbReference>
<dbReference type="InterPro" id="IPR036935">
    <property type="entry name" value="Ribosomal_bL9_N_sf"/>
</dbReference>
<dbReference type="NCBIfam" id="TIGR00158">
    <property type="entry name" value="L9"/>
    <property type="match status" value="1"/>
</dbReference>
<dbReference type="PANTHER" id="PTHR21368">
    <property type="entry name" value="50S RIBOSOMAL PROTEIN L9"/>
    <property type="match status" value="1"/>
</dbReference>
<dbReference type="Pfam" id="PF03948">
    <property type="entry name" value="Ribosomal_L9_C"/>
    <property type="match status" value="1"/>
</dbReference>
<dbReference type="Pfam" id="PF01281">
    <property type="entry name" value="Ribosomal_L9_N"/>
    <property type="match status" value="1"/>
</dbReference>
<dbReference type="SUPFAM" id="SSF55658">
    <property type="entry name" value="L9 N-domain-like"/>
    <property type="match status" value="1"/>
</dbReference>
<dbReference type="SUPFAM" id="SSF55653">
    <property type="entry name" value="Ribosomal protein L9 C-domain"/>
    <property type="match status" value="1"/>
</dbReference>
<dbReference type="PROSITE" id="PS00651">
    <property type="entry name" value="RIBOSOMAL_L9"/>
    <property type="match status" value="1"/>
</dbReference>
<keyword id="KW-0687">Ribonucleoprotein</keyword>
<keyword id="KW-0689">Ribosomal protein</keyword>
<keyword id="KW-0694">RNA-binding</keyword>
<keyword id="KW-0699">rRNA-binding</keyword>
<reference key="1">
    <citation type="journal article" date="2011" name="J. Bacteriol.">
        <title>Comparative genomics of 28 Salmonella enterica isolates: evidence for CRISPR-mediated adaptive sublineage evolution.</title>
        <authorList>
            <person name="Fricke W.F."/>
            <person name="Mammel M.K."/>
            <person name="McDermott P.F."/>
            <person name="Tartera C."/>
            <person name="White D.G."/>
            <person name="Leclerc J.E."/>
            <person name="Ravel J."/>
            <person name="Cebula T.A."/>
        </authorList>
    </citation>
    <scope>NUCLEOTIDE SEQUENCE [LARGE SCALE GENOMIC DNA]</scope>
    <source>
        <strain>SL483</strain>
    </source>
</reference>
<gene>
    <name evidence="1" type="primary">rplI</name>
    <name type="ordered locus">SeAg_B4672</name>
</gene>
<proteinExistence type="inferred from homology"/>